<feature type="chain" id="PRO_0000279818" description="Probable potassium transport system protein Kup 1">
    <location>
        <begin position="1"/>
        <end position="632"/>
    </location>
</feature>
<feature type="transmembrane region" description="Helical" evidence="1">
    <location>
        <begin position="17"/>
        <end position="37"/>
    </location>
</feature>
<feature type="transmembrane region" description="Helical" evidence="1">
    <location>
        <begin position="60"/>
        <end position="80"/>
    </location>
</feature>
<feature type="transmembrane region" description="Helical" evidence="1">
    <location>
        <begin position="106"/>
        <end position="126"/>
    </location>
</feature>
<feature type="transmembrane region" description="Helical" evidence="1">
    <location>
        <begin position="144"/>
        <end position="164"/>
    </location>
</feature>
<feature type="transmembrane region" description="Helical" evidence="1">
    <location>
        <begin position="175"/>
        <end position="195"/>
    </location>
</feature>
<feature type="transmembrane region" description="Helical" evidence="1">
    <location>
        <begin position="210"/>
        <end position="230"/>
    </location>
</feature>
<feature type="transmembrane region" description="Helical" evidence="1">
    <location>
        <begin position="254"/>
        <end position="274"/>
    </location>
</feature>
<feature type="transmembrane region" description="Helical" evidence="1">
    <location>
        <begin position="292"/>
        <end position="312"/>
    </location>
</feature>
<feature type="transmembrane region" description="Helical" evidence="1">
    <location>
        <begin position="344"/>
        <end position="364"/>
    </location>
</feature>
<feature type="transmembrane region" description="Helical" evidence="1">
    <location>
        <begin position="370"/>
        <end position="390"/>
    </location>
</feature>
<feature type="transmembrane region" description="Helical" evidence="1">
    <location>
        <begin position="401"/>
        <end position="421"/>
    </location>
</feature>
<feature type="transmembrane region" description="Helical" evidence="1">
    <location>
        <begin position="426"/>
        <end position="446"/>
    </location>
</feature>
<protein>
    <recommendedName>
        <fullName evidence="1">Probable potassium transport system protein Kup 1</fullName>
    </recommendedName>
</protein>
<evidence type="ECO:0000255" key="1">
    <source>
        <dbReference type="HAMAP-Rule" id="MF_01522"/>
    </source>
</evidence>
<dbReference type="EMBL" id="CP000133">
    <property type="protein sequence ID" value="ABC89672.1"/>
    <property type="molecule type" value="Genomic_DNA"/>
</dbReference>
<dbReference type="RefSeq" id="WP_011424210.1">
    <property type="nucleotide sequence ID" value="NC_007761.1"/>
</dbReference>
<dbReference type="KEGG" id="ret:RHE_CH00861"/>
<dbReference type="eggNOG" id="COG3158">
    <property type="taxonomic scope" value="Bacteria"/>
</dbReference>
<dbReference type="HOGENOM" id="CLU_008142_4_2_5"/>
<dbReference type="OrthoDB" id="9805577at2"/>
<dbReference type="Proteomes" id="UP000001936">
    <property type="component" value="Chromosome"/>
</dbReference>
<dbReference type="GO" id="GO:0005886">
    <property type="term" value="C:plasma membrane"/>
    <property type="evidence" value="ECO:0007669"/>
    <property type="project" value="UniProtKB-SubCell"/>
</dbReference>
<dbReference type="GO" id="GO:0015079">
    <property type="term" value="F:potassium ion transmembrane transporter activity"/>
    <property type="evidence" value="ECO:0007669"/>
    <property type="project" value="UniProtKB-UniRule"/>
</dbReference>
<dbReference type="GO" id="GO:0015293">
    <property type="term" value="F:symporter activity"/>
    <property type="evidence" value="ECO:0007669"/>
    <property type="project" value="UniProtKB-UniRule"/>
</dbReference>
<dbReference type="HAMAP" id="MF_01522">
    <property type="entry name" value="Kup"/>
    <property type="match status" value="1"/>
</dbReference>
<dbReference type="InterPro" id="IPR003855">
    <property type="entry name" value="K+_transporter"/>
</dbReference>
<dbReference type="InterPro" id="IPR053952">
    <property type="entry name" value="K_trans_C"/>
</dbReference>
<dbReference type="InterPro" id="IPR053951">
    <property type="entry name" value="K_trans_N"/>
</dbReference>
<dbReference type="InterPro" id="IPR023051">
    <property type="entry name" value="Kup"/>
</dbReference>
<dbReference type="PANTHER" id="PTHR30540:SF79">
    <property type="entry name" value="LOW AFFINITY POTASSIUM TRANSPORT SYSTEM PROTEIN KUP"/>
    <property type="match status" value="1"/>
</dbReference>
<dbReference type="PANTHER" id="PTHR30540">
    <property type="entry name" value="OSMOTIC STRESS POTASSIUM TRANSPORTER"/>
    <property type="match status" value="1"/>
</dbReference>
<dbReference type="Pfam" id="PF02705">
    <property type="entry name" value="K_trans"/>
    <property type="match status" value="1"/>
</dbReference>
<dbReference type="Pfam" id="PF22776">
    <property type="entry name" value="K_trans_C"/>
    <property type="match status" value="1"/>
</dbReference>
<reference key="1">
    <citation type="journal article" date="2006" name="Proc. Natl. Acad. Sci. U.S.A.">
        <title>The partitioned Rhizobium etli genome: genetic and metabolic redundancy in seven interacting replicons.</title>
        <authorList>
            <person name="Gonzalez V."/>
            <person name="Santamaria R.I."/>
            <person name="Bustos P."/>
            <person name="Hernandez-Gonzalez I."/>
            <person name="Medrano-Soto A."/>
            <person name="Moreno-Hagelsieb G."/>
            <person name="Janga S.C."/>
            <person name="Ramirez M.A."/>
            <person name="Jimenez-Jacinto V."/>
            <person name="Collado-Vides J."/>
            <person name="Davila G."/>
        </authorList>
    </citation>
    <scope>NUCLEOTIDE SEQUENCE [LARGE SCALE GENOMIC DNA]</scope>
    <source>
        <strain>ATCC 51251 / DSM 11541 / JCM 21823 / NBRC 15573 / CFN 42</strain>
    </source>
</reference>
<organism>
    <name type="scientific">Rhizobium etli (strain ATCC 51251 / DSM 11541 / JCM 21823 / NBRC 15573 / CFN 42)</name>
    <dbReference type="NCBI Taxonomy" id="347834"/>
    <lineage>
        <taxon>Bacteria</taxon>
        <taxon>Pseudomonadati</taxon>
        <taxon>Pseudomonadota</taxon>
        <taxon>Alphaproteobacteria</taxon>
        <taxon>Hyphomicrobiales</taxon>
        <taxon>Rhizobiaceae</taxon>
        <taxon>Rhizobium/Agrobacterium group</taxon>
        <taxon>Rhizobium</taxon>
    </lineage>
</organism>
<sequence length="632" mass="69097">MSDESHPHERHMTPRKLFYLALGSVGVVYGDIGTSPLYAFREALKPVAHDGVTRFEVISLISLMIWALTIIVTIKYVLFLLRADNDGEGGTLSLLALLMKTANGHTALLMLLGLMGAALFLGDAMITPALSVLSAVEGLKLVTPSLAEYIVPISVVILALLFVVQSRGTGAVAKFFGPITAVWFLVMAAAGISHISDDFGILAAFNPYYAVSFLLHEGFYGVVVLGAVFLTVTGAEALYADLGHFGRRPIQWAWFLLVFPALTLNYLGQGALVLGKPETMSDPFYLMYPQWALLPVVILATAATIIASQAVITGAFSLVRQGINLGFLPRMEILFTSETNTGQIFLPSVNAVLFFGVIFLVLSFKTSDALATAYGISVTGAMVVTSIMAFEFVRARWNWSLPVAVIALAPLVVLEMIFLGANLLKIHDGGYIPILIATAFTVVMWTWRRGTAILMEKTRHTDIPLASFVSSIERKSEHSPAQVPGTAIFLTSDPESAPAALLHNLKHNHVLHDRNVILTIRTVNKPRVPSHDRYKVEPISERFSRVELLFGFMESQNVSQALATLRKTGLKFDIMSTSFYLGRRKLVPDAKSGMPYWQDRLYIALANAAANPSDYFRLPANRVVELGSHVII</sequence>
<gene>
    <name evidence="1" type="primary">kup1</name>
    <name type="ordered locus">RHE_CH00861</name>
</gene>
<comment type="function">
    <text evidence="1">Transport of potassium into the cell. Likely operates as a K(+):H(+) symporter.</text>
</comment>
<comment type="catalytic activity">
    <reaction evidence="1">
        <text>K(+)(in) + H(+)(in) = K(+)(out) + H(+)(out)</text>
        <dbReference type="Rhea" id="RHEA:28490"/>
        <dbReference type="ChEBI" id="CHEBI:15378"/>
        <dbReference type="ChEBI" id="CHEBI:29103"/>
    </reaction>
    <physiologicalReaction direction="right-to-left" evidence="1">
        <dbReference type="Rhea" id="RHEA:28492"/>
    </physiologicalReaction>
</comment>
<comment type="subcellular location">
    <subcellularLocation>
        <location evidence="1">Cell inner membrane</location>
        <topology evidence="1">Multi-pass membrane protein</topology>
    </subcellularLocation>
</comment>
<comment type="similarity">
    <text evidence="1">Belongs to the HAK/KUP transporter (TC 2.A.72) family.</text>
</comment>
<proteinExistence type="inferred from homology"/>
<keyword id="KW-0997">Cell inner membrane</keyword>
<keyword id="KW-1003">Cell membrane</keyword>
<keyword id="KW-0406">Ion transport</keyword>
<keyword id="KW-0472">Membrane</keyword>
<keyword id="KW-0630">Potassium</keyword>
<keyword id="KW-0633">Potassium transport</keyword>
<keyword id="KW-1185">Reference proteome</keyword>
<keyword id="KW-0769">Symport</keyword>
<keyword id="KW-0812">Transmembrane</keyword>
<keyword id="KW-1133">Transmembrane helix</keyword>
<keyword id="KW-0813">Transport</keyword>
<name>KUP1_RHIEC</name>
<accession>Q2KBW4</accession>